<keyword id="KW-0472">Membrane</keyword>
<keyword id="KW-1185">Reference proteome</keyword>
<keyword id="KW-0812">Transmembrane</keyword>
<keyword id="KW-1133">Transmembrane helix</keyword>
<organism>
    <name type="scientific">Streptococcus mutans serotype c (strain ATCC 700610 / UA159)</name>
    <dbReference type="NCBI Taxonomy" id="210007"/>
    <lineage>
        <taxon>Bacteria</taxon>
        <taxon>Bacillati</taxon>
        <taxon>Bacillota</taxon>
        <taxon>Bacilli</taxon>
        <taxon>Lactobacillales</taxon>
        <taxon>Streptococcaceae</taxon>
        <taxon>Streptococcus</taxon>
    </lineage>
</organism>
<reference key="1">
    <citation type="journal article" date="2002" name="Proc. Natl. Acad. Sci. U.S.A.">
        <title>Genome sequence of Streptococcus mutans UA159, a cariogenic dental pathogen.</title>
        <authorList>
            <person name="Ajdic D.J."/>
            <person name="McShan W.M."/>
            <person name="McLaughlin R.E."/>
            <person name="Savic G."/>
            <person name="Chang J."/>
            <person name="Carson M.B."/>
            <person name="Primeaux C."/>
            <person name="Tian R."/>
            <person name="Kenton S."/>
            <person name="Jia H.G."/>
            <person name="Lin S.P."/>
            <person name="Qian Y."/>
            <person name="Li S."/>
            <person name="Zhu H."/>
            <person name="Najar F.Z."/>
            <person name="Lai H."/>
            <person name="White J."/>
            <person name="Roe B.A."/>
            <person name="Ferretti J.J."/>
        </authorList>
    </citation>
    <scope>NUCLEOTIDE SEQUENCE [LARGE SCALE GENOMIC DNA]</scope>
    <source>
        <strain>ATCC 700610 / UA159</strain>
    </source>
</reference>
<comment type="subcellular location">
    <subcellularLocation>
        <location evidence="1">Membrane</location>
        <topology evidence="1">Single-pass membrane protein</topology>
    </subcellularLocation>
</comment>
<comment type="similarity">
    <text evidence="1">Belongs to the UPF0154 family.</text>
</comment>
<evidence type="ECO:0000255" key="1">
    <source>
        <dbReference type="HAMAP-Rule" id="MF_00363"/>
    </source>
</evidence>
<name>Y1719_STRMU</name>
<accession>Q8DSQ4</accession>
<dbReference type="EMBL" id="AE014133">
    <property type="protein sequence ID" value="AAN59354.1"/>
    <property type="molecule type" value="Genomic_DNA"/>
</dbReference>
<dbReference type="RefSeq" id="NP_722048.1">
    <property type="nucleotide sequence ID" value="NC_004350.2"/>
</dbReference>
<dbReference type="RefSeq" id="WP_002262555.1">
    <property type="nucleotide sequence ID" value="NC_004350.2"/>
</dbReference>
<dbReference type="SMR" id="Q8DSQ4"/>
<dbReference type="STRING" id="210007.SMU_1719c"/>
<dbReference type="DNASU" id="1028944"/>
<dbReference type="KEGG" id="smu:SMU_1719c"/>
<dbReference type="PATRIC" id="fig|210007.7.peg.1537"/>
<dbReference type="eggNOG" id="COG3763">
    <property type="taxonomic scope" value="Bacteria"/>
</dbReference>
<dbReference type="HOGENOM" id="CLU_180108_0_0_9"/>
<dbReference type="OrthoDB" id="1769076at2"/>
<dbReference type="PhylomeDB" id="Q8DSQ4"/>
<dbReference type="Proteomes" id="UP000002512">
    <property type="component" value="Chromosome"/>
</dbReference>
<dbReference type="GO" id="GO:0005886">
    <property type="term" value="C:plasma membrane"/>
    <property type="evidence" value="ECO:0007669"/>
    <property type="project" value="UniProtKB-UniRule"/>
</dbReference>
<dbReference type="HAMAP" id="MF_00363">
    <property type="entry name" value="UPF0154"/>
    <property type="match status" value="1"/>
</dbReference>
<dbReference type="InterPro" id="IPR005359">
    <property type="entry name" value="UPF0154"/>
</dbReference>
<dbReference type="Pfam" id="PF03672">
    <property type="entry name" value="UPF0154"/>
    <property type="match status" value="1"/>
</dbReference>
<gene>
    <name type="ordered locus">SMU_1719c</name>
</gene>
<protein>
    <recommendedName>
        <fullName evidence="1">UPF0154 protein SMU_1719c</fullName>
    </recommendedName>
</protein>
<proteinExistence type="inferred from homology"/>
<feature type="chain" id="PRO_0000214985" description="UPF0154 protein SMU_1719c">
    <location>
        <begin position="1"/>
        <end position="82"/>
    </location>
</feature>
<feature type="transmembrane region" description="Helical" evidence="1">
    <location>
        <begin position="4"/>
        <end position="24"/>
    </location>
</feature>
<sequence>MNTFLWILLVIIALLAGLVGGTFIARKQMEKYLEENPPLNEDVIRNMMSQMGQKPSEAKVQQVVRQMNKQQKAAKAKAKKKK</sequence>